<organism>
    <name type="scientific">Shewanella woodyi (strain ATCC 51908 / MS32)</name>
    <dbReference type="NCBI Taxonomy" id="392500"/>
    <lineage>
        <taxon>Bacteria</taxon>
        <taxon>Pseudomonadati</taxon>
        <taxon>Pseudomonadota</taxon>
        <taxon>Gammaproteobacteria</taxon>
        <taxon>Alteromonadales</taxon>
        <taxon>Shewanellaceae</taxon>
        <taxon>Shewanella</taxon>
    </lineage>
</organism>
<proteinExistence type="inferred from homology"/>
<comment type="function">
    <text evidence="1">This protein binds to 23S rRNA in the presence of protein L20.</text>
</comment>
<comment type="subunit">
    <text evidence="1">Part of the 50S ribosomal subunit. Contacts protein L20.</text>
</comment>
<comment type="similarity">
    <text evidence="1">Belongs to the bacterial ribosomal protein bL21 family.</text>
</comment>
<evidence type="ECO:0000255" key="1">
    <source>
        <dbReference type="HAMAP-Rule" id="MF_01363"/>
    </source>
</evidence>
<evidence type="ECO:0000305" key="2"/>
<reference key="1">
    <citation type="submission" date="2008-02" db="EMBL/GenBank/DDBJ databases">
        <title>Complete sequence of Shewanella woodyi ATCC 51908.</title>
        <authorList>
            <consortium name="US DOE Joint Genome Institute"/>
            <person name="Copeland A."/>
            <person name="Lucas S."/>
            <person name="Lapidus A."/>
            <person name="Glavina del Rio T."/>
            <person name="Dalin E."/>
            <person name="Tice H."/>
            <person name="Bruce D."/>
            <person name="Goodwin L."/>
            <person name="Pitluck S."/>
            <person name="Sims D."/>
            <person name="Brettin T."/>
            <person name="Detter J.C."/>
            <person name="Han C."/>
            <person name="Kuske C.R."/>
            <person name="Schmutz J."/>
            <person name="Larimer F."/>
            <person name="Land M."/>
            <person name="Hauser L."/>
            <person name="Kyrpides N."/>
            <person name="Lykidis A."/>
            <person name="Zhao J.-S."/>
            <person name="Richardson P."/>
        </authorList>
    </citation>
    <scope>NUCLEOTIDE SEQUENCE [LARGE SCALE GENOMIC DNA]</scope>
    <source>
        <strain>ATCC 51908 / MS32</strain>
    </source>
</reference>
<dbReference type="EMBL" id="CP000961">
    <property type="protein sequence ID" value="ACA85297.1"/>
    <property type="molecule type" value="Genomic_DNA"/>
</dbReference>
<dbReference type="RefSeq" id="WP_012323644.1">
    <property type="nucleotide sequence ID" value="NC_010506.1"/>
</dbReference>
<dbReference type="SMR" id="B1KGG9"/>
<dbReference type="STRING" id="392500.Swoo_1004"/>
<dbReference type="KEGG" id="swd:Swoo_1004"/>
<dbReference type="eggNOG" id="COG0261">
    <property type="taxonomic scope" value="Bacteria"/>
</dbReference>
<dbReference type="HOGENOM" id="CLU_061463_3_3_6"/>
<dbReference type="Proteomes" id="UP000002168">
    <property type="component" value="Chromosome"/>
</dbReference>
<dbReference type="GO" id="GO:0005737">
    <property type="term" value="C:cytoplasm"/>
    <property type="evidence" value="ECO:0007669"/>
    <property type="project" value="UniProtKB-ARBA"/>
</dbReference>
<dbReference type="GO" id="GO:1990904">
    <property type="term" value="C:ribonucleoprotein complex"/>
    <property type="evidence" value="ECO:0007669"/>
    <property type="project" value="UniProtKB-KW"/>
</dbReference>
<dbReference type="GO" id="GO:0005840">
    <property type="term" value="C:ribosome"/>
    <property type="evidence" value="ECO:0007669"/>
    <property type="project" value="UniProtKB-KW"/>
</dbReference>
<dbReference type="GO" id="GO:0019843">
    <property type="term" value="F:rRNA binding"/>
    <property type="evidence" value="ECO:0007669"/>
    <property type="project" value="UniProtKB-UniRule"/>
</dbReference>
<dbReference type="GO" id="GO:0003735">
    <property type="term" value="F:structural constituent of ribosome"/>
    <property type="evidence" value="ECO:0007669"/>
    <property type="project" value="InterPro"/>
</dbReference>
<dbReference type="GO" id="GO:0006412">
    <property type="term" value="P:translation"/>
    <property type="evidence" value="ECO:0007669"/>
    <property type="project" value="UniProtKB-UniRule"/>
</dbReference>
<dbReference type="HAMAP" id="MF_01363">
    <property type="entry name" value="Ribosomal_bL21"/>
    <property type="match status" value="1"/>
</dbReference>
<dbReference type="InterPro" id="IPR028909">
    <property type="entry name" value="bL21-like"/>
</dbReference>
<dbReference type="InterPro" id="IPR036164">
    <property type="entry name" value="bL21-like_sf"/>
</dbReference>
<dbReference type="InterPro" id="IPR001787">
    <property type="entry name" value="Ribosomal_bL21"/>
</dbReference>
<dbReference type="InterPro" id="IPR018258">
    <property type="entry name" value="Ribosomal_bL21_CS"/>
</dbReference>
<dbReference type="NCBIfam" id="TIGR00061">
    <property type="entry name" value="L21"/>
    <property type="match status" value="1"/>
</dbReference>
<dbReference type="PANTHER" id="PTHR21349">
    <property type="entry name" value="50S RIBOSOMAL PROTEIN L21"/>
    <property type="match status" value="1"/>
</dbReference>
<dbReference type="PANTHER" id="PTHR21349:SF0">
    <property type="entry name" value="LARGE RIBOSOMAL SUBUNIT PROTEIN BL21M"/>
    <property type="match status" value="1"/>
</dbReference>
<dbReference type="Pfam" id="PF00829">
    <property type="entry name" value="Ribosomal_L21p"/>
    <property type="match status" value="1"/>
</dbReference>
<dbReference type="SUPFAM" id="SSF141091">
    <property type="entry name" value="L21p-like"/>
    <property type="match status" value="1"/>
</dbReference>
<dbReference type="PROSITE" id="PS01169">
    <property type="entry name" value="RIBOSOMAL_L21"/>
    <property type="match status" value="1"/>
</dbReference>
<keyword id="KW-1185">Reference proteome</keyword>
<keyword id="KW-0687">Ribonucleoprotein</keyword>
<keyword id="KW-0689">Ribosomal protein</keyword>
<keyword id="KW-0694">RNA-binding</keyword>
<keyword id="KW-0699">rRNA-binding</keyword>
<accession>B1KGG9</accession>
<name>RL21_SHEWM</name>
<gene>
    <name evidence="1" type="primary">rplU</name>
    <name type="ordered locus">Swoo_1004</name>
</gene>
<feature type="chain" id="PRO_1000143851" description="Large ribosomal subunit protein bL21">
    <location>
        <begin position="1"/>
        <end position="103"/>
    </location>
</feature>
<protein>
    <recommendedName>
        <fullName evidence="1">Large ribosomal subunit protein bL21</fullName>
    </recommendedName>
    <alternativeName>
        <fullName evidence="2">50S ribosomal protein L21</fullName>
    </alternativeName>
</protein>
<sequence>MYAVFQSGGKQHRVAEGHTVRLEKLEVATGETVEFDQVLLVADGETVHVGAPLVEGGKVVAEVVSHGRDEKVTIVKFRRRKHHDKKMGHRQWFTEVKITAINA</sequence>